<organism>
    <name type="scientific">Caulobacter sp. (strain RHG1)</name>
    <dbReference type="NCBI Taxonomy" id="2545762"/>
    <lineage>
        <taxon>Bacteria</taxon>
        <taxon>Pseudomonadati</taxon>
        <taxon>Pseudomonadota</taxon>
        <taxon>Alphaproteobacteria</taxon>
        <taxon>Caulobacterales</taxon>
        <taxon>Caulobacteraceae</taxon>
        <taxon>Caulobacter</taxon>
    </lineage>
</organism>
<dbReference type="EMBL" id="SMZP00000000">
    <property type="protein sequence ID" value="NQE62944.1"/>
    <property type="molecule type" value="Genomic_DNA"/>
</dbReference>
<dbReference type="RefSeq" id="WP_172268984.1">
    <property type="nucleotide sequence ID" value="NZ_SMZP01000004.1"/>
</dbReference>
<dbReference type="SMR" id="P0DTK9"/>
<dbReference type="GO" id="GO:0016787">
    <property type="term" value="F:hydrolase activity"/>
    <property type="evidence" value="ECO:0007669"/>
    <property type="project" value="UniProtKB-KW"/>
</dbReference>
<dbReference type="InterPro" id="IPR056175">
    <property type="entry name" value="Acb1-like_C"/>
</dbReference>
<dbReference type="InterPro" id="IPR024459">
    <property type="entry name" value="Acb1-like_N"/>
</dbReference>
<dbReference type="InterPro" id="IPR006445">
    <property type="entry name" value="Phage-assoc_HI1409"/>
</dbReference>
<dbReference type="NCBIfam" id="TIGR01555">
    <property type="entry name" value="phge_rel_HI1409"/>
    <property type="match status" value="1"/>
</dbReference>
<dbReference type="Pfam" id="PF23474">
    <property type="entry name" value="Acb1"/>
    <property type="match status" value="1"/>
</dbReference>
<dbReference type="Pfam" id="PF06381">
    <property type="entry name" value="Phage_portal_3"/>
    <property type="match status" value="1"/>
</dbReference>
<keyword id="KW-0378">Hydrolase</keyword>
<accession>P0DTK9</accession>
<sequence length="627" mass="68259">MISLDSLRSLVTGLGTSKDKGASASYYFQPLGPDELNAMHRGDWLAQKVIDIIPNDMTREWRNWQAKQPQIEKIEAVEKAPLINLQVKVNLALKMARLHGGSVIYIGIKGTVDLSEPLDPRSIGRGDLAYLHVLSRYEVTCGETVTDVTSEFYGQPSYYEVAGANGAPVQIHPSRVVRFVGAPVLDRRSVGNDPWGDSVLQAVYDAVRNAGSAQGHIAALIPEAKVDIIHMPGLGEFTKTEAGRAKLTARFTYANTMKSMLNAVLLDGTGGAGKDAGGEKWEQKQISFAQLPELLQSYLSIASAAADIPATRMLSQSPKGLNATGDSDMRNHYDNCTARQGTELSPALNRLDEVILRSALGSRPAAIYYEWAPLWGLTEKEQAEVFKMKADGARALAGAKGGPLLPVNALSDALVNTFTEDGSLPGLEAAIEEHGTLADQPETESANENTEQPESGEEGEEGQPTRRAANDAKPRPLYVSRKLINGREFLKWAKEQGFAKTLKADDLHVTITYSREAVDWMAMGQSWGGEDGKLTVPAGGARLVEPLGDEGAVVLLFNSSELAWRHMGMREAGASWDHPEYQPHVTITYEVGDVDLSQVEPYRGKLVFGPEVFEEIDECWAENLNET</sequence>
<reference key="1">
    <citation type="journal article" date="2019" name="Mol. Plant Microbe Interact.">
        <title>Plant Growth Promotion Driven by a Novel Caulobacter Strain.</title>
        <authorList>
            <person name="Luo D."/>
            <person name="Langendries S."/>
            <person name="Mendez S.G."/>
            <person name="De Ryck J."/>
            <person name="Liu D."/>
            <person name="Beirinckx S."/>
            <person name="Willems A."/>
            <person name="Russinova E."/>
            <person name="Debode J."/>
            <person name="Goormachtig S."/>
        </authorList>
    </citation>
    <scope>NUCLEOTIDE SEQUENCE [GENOMIC DNA]</scope>
    <source>
        <strain>RHG1</strain>
    </source>
</reference>
<reference key="2">
    <citation type="journal article" date="2022" name="Nature">
        <title>Phage anti-CBASS and anti-Pycsar nucleases subvert bacterial immunity.</title>
        <authorList>
            <person name="Hobbs S.J."/>
            <person name="Wein T."/>
            <person name="Lu A."/>
            <person name="Morehouse B.R."/>
            <person name="Schnabel J."/>
            <person name="Leavitt A."/>
            <person name="Yirmiya E."/>
            <person name="Sorek R."/>
            <person name="Kranzusch P.J."/>
        </authorList>
    </citation>
    <scope>FUNCTION</scope>
    <scope>CATALYTIC ACTIVITY</scope>
    <source>
        <strain>RHG1</strain>
    </source>
</reference>
<evidence type="ECO:0000250" key="1">
    <source>
        <dbReference type="UniProtKB" id="A0A868BQY3"/>
    </source>
</evidence>
<evidence type="ECO:0000256" key="2">
    <source>
        <dbReference type="SAM" id="MobiDB-lite"/>
    </source>
</evidence>
<evidence type="ECO:0000269" key="3">
    <source>
    </source>
</evidence>
<evidence type="ECO:0000303" key="4">
    <source>
    </source>
</evidence>
<evidence type="ECO:0000305" key="5"/>
<protein>
    <recommendedName>
        <fullName evidence="4">Anti-CBASS protein Acb1</fullName>
        <shortName evidence="4">Acb1</shortName>
    </recommendedName>
</protein>
<feature type="chain" id="PRO_0000456665" description="Anti-CBASS protein Acb1">
    <location>
        <begin position="1"/>
        <end position="627"/>
    </location>
</feature>
<feature type="region of interest" description="Disordered" evidence="2">
    <location>
        <begin position="437"/>
        <end position="474"/>
    </location>
</feature>
<feature type="active site" evidence="1">
    <location>
        <position position="508"/>
    </location>
</feature>
<feature type="active site" evidence="1">
    <location>
        <position position="510"/>
    </location>
</feature>
<feature type="active site" evidence="1">
    <location>
        <position position="584"/>
    </location>
</feature>
<feature type="active site" evidence="1">
    <location>
        <position position="586"/>
    </location>
</feature>
<feature type="binding site" evidence="1">
    <location>
        <position position="105"/>
    </location>
    <ligand>
        <name>3',3'-cGAMP</name>
        <dbReference type="ChEBI" id="CHEBI:71501"/>
    </ligand>
</feature>
<feature type="binding site" evidence="1">
    <location>
        <position position="105"/>
    </location>
    <ligand>
        <name>3',3'-cUAMP</name>
        <dbReference type="ChEBI" id="CHEBI:143809"/>
    </ligand>
</feature>
<feature type="binding site" description="specific to adenosine" evidence="1">
    <location>
        <position position="614"/>
    </location>
    <ligand>
        <name>3',3'-cGAMP</name>
        <dbReference type="ChEBI" id="CHEBI:71501"/>
    </ligand>
</feature>
<feature type="binding site" description="specific to adenosine" evidence="1">
    <location>
        <position position="614"/>
    </location>
    <ligand>
        <name>3',3'-cUAMP</name>
        <dbReference type="ChEBI" id="CHEBI:143809"/>
    </ligand>
</feature>
<feature type="binding site" evidence="1">
    <location>
        <position position="620"/>
    </location>
    <ligand>
        <name>3',3'-cGAMP</name>
        <dbReference type="ChEBI" id="CHEBI:71501"/>
    </ligand>
</feature>
<feature type="binding site" evidence="1">
    <location>
        <position position="620"/>
    </location>
    <ligand>
        <name>3',3'-cUAMP</name>
        <dbReference type="ChEBI" id="CHEBI:143809"/>
    </ligand>
</feature>
<name>ACB1_CAUSR</name>
<proteinExistence type="evidence at protein level"/>
<comment type="function">
    <text evidence="3">Counteracts or regulates the endogenous CBASS antiviral defense system. Phosphodiesterase that enables metal-independent hydrolysis of the host cyclic di- and trinucleotide CBASS signals such as 3'3'-cGAMP, 3'3'cUA, and 3'3'3'-cAAA.</text>
</comment>
<comment type="catalytic activity">
    <reaction evidence="3">
        <text>3',3'-cUAMP + H2O = U[3'-5']pAp[3'] + H(+)</text>
        <dbReference type="Rhea" id="RHEA:72835"/>
        <dbReference type="ChEBI" id="CHEBI:15377"/>
        <dbReference type="ChEBI" id="CHEBI:15378"/>
        <dbReference type="ChEBI" id="CHEBI:143809"/>
        <dbReference type="ChEBI" id="CHEBI:192498"/>
    </reaction>
    <physiologicalReaction direction="left-to-right" evidence="3">
        <dbReference type="Rhea" id="RHEA:72836"/>
    </physiologicalReaction>
</comment>
<comment type="catalytic activity">
    <reaction evidence="3">
        <text>3',3',3'-c-tri-AMP + H2O = A[3'-5']pA[3'-5']pAp[3'] + H(+)</text>
        <dbReference type="Rhea" id="RHEA:72859"/>
        <dbReference type="ChEBI" id="CHEBI:15377"/>
        <dbReference type="ChEBI" id="CHEBI:15378"/>
        <dbReference type="ChEBI" id="CHEBI:192523"/>
        <dbReference type="ChEBI" id="CHEBI:192530"/>
    </reaction>
    <physiologicalReaction direction="left-to-right" evidence="3">
        <dbReference type="Rhea" id="RHEA:72860"/>
    </physiologicalReaction>
</comment>
<comment type="catalytic activity">
    <reaction evidence="3">
        <text>3',3',3'-cAAG + H2O = G[3'-5']pA[3'-5']pAp[3'] + H(+)</text>
        <dbReference type="Rhea" id="RHEA:72863"/>
        <dbReference type="ChEBI" id="CHEBI:15377"/>
        <dbReference type="ChEBI" id="CHEBI:15378"/>
        <dbReference type="ChEBI" id="CHEBI:143810"/>
        <dbReference type="ChEBI" id="CHEBI:192532"/>
    </reaction>
    <physiologicalReaction direction="left-to-right" evidence="3">
        <dbReference type="Rhea" id="RHEA:72864"/>
    </physiologicalReaction>
</comment>
<comment type="catalytic activity">
    <reaction evidence="3">
        <text>3',3',3'-cAAG + H2O = A[3'-5']pG[3'-5']pAp[3'] + H(+)</text>
        <dbReference type="Rhea" id="RHEA:72867"/>
        <dbReference type="ChEBI" id="CHEBI:15377"/>
        <dbReference type="ChEBI" id="CHEBI:15378"/>
        <dbReference type="ChEBI" id="CHEBI:143810"/>
        <dbReference type="ChEBI" id="CHEBI:192533"/>
    </reaction>
    <physiologicalReaction direction="left-to-right" evidence="3">
        <dbReference type="Rhea" id="RHEA:72868"/>
    </physiologicalReaction>
</comment>
<comment type="catalytic activity">
    <reaction evidence="3">
        <text>3',3'-cGAMP + H2O = G[3'-5']pAp[3'] + H(+)</text>
        <dbReference type="Rhea" id="RHEA:72831"/>
        <dbReference type="ChEBI" id="CHEBI:15377"/>
        <dbReference type="ChEBI" id="CHEBI:15378"/>
        <dbReference type="ChEBI" id="CHEBI:71501"/>
        <dbReference type="ChEBI" id="CHEBI:192497"/>
    </reaction>
    <physiologicalReaction direction="left-to-right" evidence="3">
        <dbReference type="Rhea" id="RHEA:72832"/>
    </physiologicalReaction>
</comment>
<comment type="miscellaneous">
    <text evidence="3">This homolog of an antiviral immune evasion nuclease may be due to cryptic prophages, or it may play a role in regulating the endogenous antiviral defense system based on cyclic nucleotides.</text>
</comment>
<comment type="similarity">
    <text evidence="5">Belongs to the anti-CBASS protein Acb1 family.</text>
</comment>